<dbReference type="EMBL" id="U67136">
    <property type="protein sequence ID" value="AAB07887.1"/>
    <property type="molecule type" value="mRNA"/>
</dbReference>
<dbReference type="EMBL" id="J04597">
    <property type="protein sequence ID" value="AAA50420.1"/>
    <property type="molecule type" value="mRNA"/>
</dbReference>
<dbReference type="PIR" id="A32461">
    <property type="entry name" value="A32461"/>
</dbReference>
<dbReference type="SMR" id="P24587"/>
<dbReference type="CORUM" id="P24587"/>
<dbReference type="FunCoup" id="P24587">
    <property type="interactions" value="870"/>
</dbReference>
<dbReference type="IntAct" id="P24587">
    <property type="interactions" value="1"/>
</dbReference>
<dbReference type="MINT" id="P24587"/>
<dbReference type="STRING" id="10116.ENSRNOP00000008416"/>
<dbReference type="iPTMnet" id="P24587"/>
<dbReference type="PhosphoSitePlus" id="P24587"/>
<dbReference type="SwissPalm" id="P24587"/>
<dbReference type="PaxDb" id="10116-ENSRNOP00000008416"/>
<dbReference type="UCSC" id="RGD:620829">
    <property type="organism name" value="rat"/>
</dbReference>
<dbReference type="AGR" id="RGD:620829"/>
<dbReference type="RGD" id="620829">
    <property type="gene designation" value="Akap5"/>
</dbReference>
<dbReference type="eggNOG" id="ENOG502S1NI">
    <property type="taxonomic scope" value="Eukaryota"/>
</dbReference>
<dbReference type="InParanoid" id="P24587"/>
<dbReference type="PhylomeDB" id="P24587"/>
<dbReference type="Reactome" id="R-RNO-399719">
    <property type="pathway name" value="Trafficking of AMPA receptors"/>
</dbReference>
<dbReference type="PRO" id="PR:P24587"/>
<dbReference type="Proteomes" id="UP000002494">
    <property type="component" value="Unplaced"/>
</dbReference>
<dbReference type="GO" id="GO:0032279">
    <property type="term" value="C:asymmetric synapse"/>
    <property type="evidence" value="ECO:0000314"/>
    <property type="project" value="RGD"/>
</dbReference>
<dbReference type="GO" id="GO:0016323">
    <property type="term" value="C:basolateral plasma membrane"/>
    <property type="evidence" value="ECO:0000314"/>
    <property type="project" value="RGD"/>
</dbReference>
<dbReference type="GO" id="GO:0005737">
    <property type="term" value="C:cytoplasm"/>
    <property type="evidence" value="ECO:0000266"/>
    <property type="project" value="RGD"/>
</dbReference>
<dbReference type="GO" id="GO:0009898">
    <property type="term" value="C:cytoplasmic side of plasma membrane"/>
    <property type="evidence" value="ECO:0000266"/>
    <property type="project" value="RGD"/>
</dbReference>
<dbReference type="GO" id="GO:0005856">
    <property type="term" value="C:cytoskeleton"/>
    <property type="evidence" value="ECO:0000266"/>
    <property type="project" value="RGD"/>
</dbReference>
<dbReference type="GO" id="GO:0030425">
    <property type="term" value="C:dendrite"/>
    <property type="evidence" value="ECO:0000314"/>
    <property type="project" value="SynGO-UCL"/>
</dbReference>
<dbReference type="GO" id="GO:0032590">
    <property type="term" value="C:dendrite membrane"/>
    <property type="evidence" value="ECO:0000314"/>
    <property type="project" value="RGD"/>
</dbReference>
<dbReference type="GO" id="GO:0043198">
    <property type="term" value="C:dendritic shaft"/>
    <property type="evidence" value="ECO:0000314"/>
    <property type="project" value="RGD"/>
</dbReference>
<dbReference type="GO" id="GO:0043197">
    <property type="term" value="C:dendritic spine"/>
    <property type="evidence" value="ECO:0000314"/>
    <property type="project" value="RGD"/>
</dbReference>
<dbReference type="GO" id="GO:0032591">
    <property type="term" value="C:dendritic spine membrane"/>
    <property type="evidence" value="ECO:0000314"/>
    <property type="project" value="RGD"/>
</dbReference>
<dbReference type="GO" id="GO:0060076">
    <property type="term" value="C:excitatory synapse"/>
    <property type="evidence" value="ECO:0000314"/>
    <property type="project" value="SynGO-UCL"/>
</dbReference>
<dbReference type="GO" id="GO:0031527">
    <property type="term" value="C:filopodium membrane"/>
    <property type="evidence" value="ECO:0000314"/>
    <property type="project" value="RGD"/>
</dbReference>
<dbReference type="GO" id="GO:0098978">
    <property type="term" value="C:glutamatergic synapse"/>
    <property type="evidence" value="ECO:0000314"/>
    <property type="project" value="SynGO"/>
</dbReference>
<dbReference type="GO" id="GO:0045121">
    <property type="term" value="C:membrane raft"/>
    <property type="evidence" value="ECO:0000250"/>
    <property type="project" value="UniProtKB"/>
</dbReference>
<dbReference type="GO" id="GO:0043025">
    <property type="term" value="C:neuronal cell body"/>
    <property type="evidence" value="ECO:0000314"/>
    <property type="project" value="RGD"/>
</dbReference>
<dbReference type="GO" id="GO:0048471">
    <property type="term" value="C:perinuclear region of cytoplasm"/>
    <property type="evidence" value="ECO:0000314"/>
    <property type="project" value="RGD"/>
</dbReference>
<dbReference type="GO" id="GO:0005886">
    <property type="term" value="C:plasma membrane"/>
    <property type="evidence" value="ECO:0000314"/>
    <property type="project" value="UniProtKB"/>
</dbReference>
<dbReference type="GO" id="GO:0014069">
    <property type="term" value="C:postsynaptic density"/>
    <property type="evidence" value="ECO:0000318"/>
    <property type="project" value="GO_Central"/>
</dbReference>
<dbReference type="GO" id="GO:0099092">
    <property type="term" value="C:postsynaptic density, intracellular component"/>
    <property type="evidence" value="ECO:0000314"/>
    <property type="project" value="SynGO"/>
</dbReference>
<dbReference type="GO" id="GO:0045211">
    <property type="term" value="C:postsynaptic membrane"/>
    <property type="evidence" value="ECO:0007669"/>
    <property type="project" value="UniProtKB-SubCell"/>
</dbReference>
<dbReference type="GO" id="GO:0098837">
    <property type="term" value="C:postsynaptic recycling endosome"/>
    <property type="evidence" value="ECO:0000266"/>
    <property type="project" value="RGD"/>
</dbReference>
<dbReference type="GO" id="GO:0098944">
    <property type="term" value="C:postsynaptic recycling endosome membrane"/>
    <property type="evidence" value="ECO:0007669"/>
    <property type="project" value="UniProtKB-SubCell"/>
</dbReference>
<dbReference type="GO" id="GO:0003779">
    <property type="term" value="F:actin binding"/>
    <property type="evidence" value="ECO:0000314"/>
    <property type="project" value="RGD"/>
</dbReference>
<dbReference type="GO" id="GO:0008179">
    <property type="term" value="F:adenylate cyclase binding"/>
    <property type="evidence" value="ECO:0000314"/>
    <property type="project" value="RGD"/>
</dbReference>
<dbReference type="GO" id="GO:0031698">
    <property type="term" value="F:beta-2 adrenergic receptor binding"/>
    <property type="evidence" value="ECO:0000353"/>
    <property type="project" value="ARUK-UCL"/>
</dbReference>
<dbReference type="GO" id="GO:0045296">
    <property type="term" value="F:cadherin binding"/>
    <property type="evidence" value="ECO:0000353"/>
    <property type="project" value="RGD"/>
</dbReference>
<dbReference type="GO" id="GO:0005516">
    <property type="term" value="F:calmodulin binding"/>
    <property type="evidence" value="ECO:0000266"/>
    <property type="project" value="RGD"/>
</dbReference>
<dbReference type="GO" id="GO:0001664">
    <property type="term" value="F:G protein-coupled receptor binding"/>
    <property type="evidence" value="ECO:0000353"/>
    <property type="project" value="RGD"/>
</dbReference>
<dbReference type="GO" id="GO:0050811">
    <property type="term" value="F:GABA receptor binding"/>
    <property type="evidence" value="ECO:0000314"/>
    <property type="project" value="RGD"/>
</dbReference>
<dbReference type="GO" id="GO:0035254">
    <property type="term" value="F:glutamate receptor binding"/>
    <property type="evidence" value="ECO:0000353"/>
    <property type="project" value="SynGO-UCL"/>
</dbReference>
<dbReference type="GO" id="GO:0019900">
    <property type="term" value="F:kinase binding"/>
    <property type="evidence" value="ECO:0000314"/>
    <property type="project" value="RGD"/>
</dbReference>
<dbReference type="GO" id="GO:0060090">
    <property type="term" value="F:molecular adaptor activity"/>
    <property type="evidence" value="ECO:0000314"/>
    <property type="project" value="SynGO-UCL"/>
</dbReference>
<dbReference type="GO" id="GO:0019904">
    <property type="term" value="F:protein domain specific binding"/>
    <property type="evidence" value="ECO:0000314"/>
    <property type="project" value="RGD"/>
</dbReference>
<dbReference type="GO" id="GO:0034237">
    <property type="term" value="F:protein kinase A regulatory subunit binding"/>
    <property type="evidence" value="ECO:0000314"/>
    <property type="project" value="RGD"/>
</dbReference>
<dbReference type="GO" id="GO:0019901">
    <property type="term" value="F:protein kinase binding"/>
    <property type="evidence" value="ECO:0000314"/>
    <property type="project" value="RGD"/>
</dbReference>
<dbReference type="GO" id="GO:0030346">
    <property type="term" value="F:protein phosphatase 2B binding"/>
    <property type="evidence" value="ECO:0000314"/>
    <property type="project" value="RGD"/>
</dbReference>
<dbReference type="GO" id="GO:0044877">
    <property type="term" value="F:protein-containing complex binding"/>
    <property type="evidence" value="ECO:0000353"/>
    <property type="project" value="RGD"/>
</dbReference>
<dbReference type="GO" id="GO:0097110">
    <property type="term" value="F:scaffold protein binding"/>
    <property type="evidence" value="ECO:0000353"/>
    <property type="project" value="SynGO-UCL"/>
</dbReference>
<dbReference type="GO" id="GO:0017124">
    <property type="term" value="F:SH3 domain binding"/>
    <property type="evidence" value="ECO:0000353"/>
    <property type="project" value="SynGO-UCL"/>
</dbReference>
<dbReference type="GO" id="GO:0007193">
    <property type="term" value="P:adenylate cyclase-inhibiting G protein-coupled receptor signaling pathway"/>
    <property type="evidence" value="ECO:0000266"/>
    <property type="project" value="RGD"/>
</dbReference>
<dbReference type="GO" id="GO:0036394">
    <property type="term" value="P:amylase secretion"/>
    <property type="evidence" value="ECO:0000266"/>
    <property type="project" value="RGD"/>
</dbReference>
<dbReference type="GO" id="GO:0033173">
    <property type="term" value="P:calcineurin-NFAT signaling cascade"/>
    <property type="evidence" value="ECO:0000266"/>
    <property type="project" value="RGD"/>
</dbReference>
<dbReference type="GO" id="GO:0071277">
    <property type="term" value="P:cellular response to calcium ion"/>
    <property type="evidence" value="ECO:0000266"/>
    <property type="project" value="RGD"/>
</dbReference>
<dbReference type="GO" id="GO:0071466">
    <property type="term" value="P:cellular response to xenobiotic stimulus"/>
    <property type="evidence" value="ECO:0000266"/>
    <property type="project" value="RGD"/>
</dbReference>
<dbReference type="GO" id="GO:0070073">
    <property type="term" value="P:clustering of voltage-gated calcium channels"/>
    <property type="evidence" value="ECO:0000266"/>
    <property type="project" value="RGD"/>
</dbReference>
<dbReference type="GO" id="GO:0045163">
    <property type="term" value="P:clustering of voltage-gated potassium channels"/>
    <property type="evidence" value="ECO:0000266"/>
    <property type="project" value="RGD"/>
</dbReference>
<dbReference type="GO" id="GO:0051649">
    <property type="term" value="P:establishment of localization in cell"/>
    <property type="evidence" value="ECO:0000266"/>
    <property type="project" value="RGD"/>
</dbReference>
<dbReference type="GO" id="GO:0010467">
    <property type="term" value="P:gene expression"/>
    <property type="evidence" value="ECO:0000266"/>
    <property type="project" value="RGD"/>
</dbReference>
<dbReference type="GO" id="GO:0021766">
    <property type="term" value="P:hippocampus development"/>
    <property type="evidence" value="ECO:0000270"/>
    <property type="project" value="RGD"/>
</dbReference>
<dbReference type="GO" id="GO:0060135">
    <property type="term" value="P:maternal process involved in female pregnancy"/>
    <property type="evidence" value="ECO:0000270"/>
    <property type="project" value="RGD"/>
</dbReference>
<dbReference type="GO" id="GO:0007194">
    <property type="term" value="P:negative regulation of adenylate cyclase activity"/>
    <property type="evidence" value="ECO:0000314"/>
    <property type="project" value="UniProtKB"/>
</dbReference>
<dbReference type="GO" id="GO:0043271">
    <property type="term" value="P:negative regulation of monoatomic ion transport"/>
    <property type="evidence" value="ECO:0000315"/>
    <property type="project" value="RGD"/>
</dbReference>
<dbReference type="GO" id="GO:0043267">
    <property type="term" value="P:negative regulation of potassium ion transport"/>
    <property type="evidence" value="ECO:0000315"/>
    <property type="project" value="RGD"/>
</dbReference>
<dbReference type="GO" id="GO:0070886">
    <property type="term" value="P:positive regulation of calcineurin-NFAT signaling cascade"/>
    <property type="evidence" value="ECO:0000315"/>
    <property type="project" value="UniProtKB"/>
</dbReference>
<dbReference type="GO" id="GO:0010524">
    <property type="term" value="P:positive regulation of calcium ion transport into cytosol"/>
    <property type="evidence" value="ECO:0000314"/>
    <property type="project" value="RGD"/>
</dbReference>
<dbReference type="GO" id="GO:0050775">
    <property type="term" value="P:positive regulation of dendrite morphogenesis"/>
    <property type="evidence" value="ECO:0000315"/>
    <property type="project" value="RGD"/>
</dbReference>
<dbReference type="GO" id="GO:1905751">
    <property type="term" value="P:positive regulation of endosome to plasma membrane protein transport"/>
    <property type="evidence" value="ECO:0000266"/>
    <property type="project" value="RGD"/>
</dbReference>
<dbReference type="GO" id="GO:1900273">
    <property type="term" value="P:positive regulation of long-term synaptic potentiation"/>
    <property type="evidence" value="ECO:0000266"/>
    <property type="project" value="RGD"/>
</dbReference>
<dbReference type="GO" id="GO:0042307">
    <property type="term" value="P:positive regulation of protein import into nucleus"/>
    <property type="evidence" value="ECO:0000315"/>
    <property type="project" value="RGD"/>
</dbReference>
<dbReference type="GO" id="GO:1903078">
    <property type="term" value="P:positive regulation of protein localization to plasma membrane"/>
    <property type="evidence" value="ECO:0000266"/>
    <property type="project" value="RGD"/>
</dbReference>
<dbReference type="GO" id="GO:0099630">
    <property type="term" value="P:postsynaptic neurotransmitter receptor cycle"/>
    <property type="evidence" value="ECO:0000266"/>
    <property type="project" value="RGD"/>
</dbReference>
<dbReference type="GO" id="GO:0032984">
    <property type="term" value="P:protein-containing complex disassembly"/>
    <property type="evidence" value="ECO:0000314"/>
    <property type="project" value="RGD"/>
</dbReference>
<dbReference type="GO" id="GO:0043113">
    <property type="term" value="P:receptor clustering"/>
    <property type="evidence" value="ECO:0000266"/>
    <property type="project" value="RGD"/>
</dbReference>
<dbReference type="GO" id="GO:1903538">
    <property type="term" value="P:regulation of meiotic cell cycle process involved in oocyte maturation"/>
    <property type="evidence" value="ECO:0000266"/>
    <property type="project" value="RGD"/>
</dbReference>
<dbReference type="GO" id="GO:0099149">
    <property type="term" value="P:regulation of postsynaptic neurotransmitter receptor internalization"/>
    <property type="evidence" value="ECO:0000314"/>
    <property type="project" value="SynGO"/>
</dbReference>
<dbReference type="GO" id="GO:0010738">
    <property type="term" value="P:regulation of protein kinase A signaling"/>
    <property type="evidence" value="ECO:0000266"/>
    <property type="project" value="RGD"/>
</dbReference>
<dbReference type="GO" id="GO:0051602">
    <property type="term" value="P:response to electrical stimulus"/>
    <property type="evidence" value="ECO:0000270"/>
    <property type="project" value="RGD"/>
</dbReference>
<dbReference type="GO" id="GO:0014850">
    <property type="term" value="P:response to muscle activity"/>
    <property type="evidence" value="ECO:0000270"/>
    <property type="project" value="RGD"/>
</dbReference>
<dbReference type="GO" id="GO:0021510">
    <property type="term" value="P:spinal cord development"/>
    <property type="evidence" value="ECO:0000270"/>
    <property type="project" value="RGD"/>
</dbReference>
<dbReference type="GO" id="GO:0007416">
    <property type="term" value="P:synapse assembly"/>
    <property type="evidence" value="ECO:0000266"/>
    <property type="project" value="RGD"/>
</dbReference>
<dbReference type="InterPro" id="IPR042375">
    <property type="entry name" value="AKAP5"/>
</dbReference>
<dbReference type="InterPro" id="IPR001573">
    <property type="entry name" value="AKAP_WSK"/>
</dbReference>
<dbReference type="PANTHER" id="PTHR15182:SF0">
    <property type="entry name" value="A-KINASE ANCHOR PROTEIN 5"/>
    <property type="match status" value="1"/>
</dbReference>
<dbReference type="PANTHER" id="PTHR15182">
    <property type="entry name" value="A-KINASE ANCHOR PROTEIN 5-RELATED"/>
    <property type="match status" value="1"/>
</dbReference>
<dbReference type="Pfam" id="PF03832">
    <property type="entry name" value="WSK"/>
    <property type="match status" value="1"/>
</dbReference>
<dbReference type="SUPFAM" id="SSF69349">
    <property type="entry name" value="Phage fibre proteins"/>
    <property type="match status" value="1"/>
</dbReference>
<dbReference type="PROSITE" id="PS51893">
    <property type="entry name" value="AKAP_CAM_BD"/>
    <property type="match status" value="1"/>
</dbReference>
<reference key="1">
    <citation type="submission" date="1996-08" db="EMBL/GenBank/DDBJ databases">
        <title>Characterization of rat AKAP150.</title>
        <authorList>
            <person name="Takai Y."/>
            <person name="Irie M."/>
            <person name="Toyada A."/>
            <person name="Hata Y."/>
        </authorList>
    </citation>
    <scope>NUCLEOTIDE SEQUENCE [MRNA]</scope>
</reference>
<reference key="2">
    <citation type="journal article" date="1989" name="J. Biol. Chem.">
        <title>High affinity binding protein for the regulatory subunit of cAMP-dependent protein kinase II-B. Cloning, characterization, and expression of cDNAs for rat brain P150.</title>
        <authorList>
            <person name="Bregman D.B."/>
            <person name="Bhattacharyya N."/>
            <person name="Rubin C.S."/>
        </authorList>
    </citation>
    <scope>NUCLEOTIDE SEQUENCE [MRNA] OF 251-714</scope>
    <source>
        <tissue>Brain</tissue>
    </source>
</reference>
<reference key="3">
    <citation type="journal article" date="2012" name="Nat. Commun.">
        <title>Quantitative maps of protein phosphorylation sites across 14 different rat organs and tissues.</title>
        <authorList>
            <person name="Lundby A."/>
            <person name="Secher A."/>
            <person name="Lage K."/>
            <person name="Nordsborg N.B."/>
            <person name="Dmytriyev A."/>
            <person name="Lundby C."/>
            <person name="Olsen J.V."/>
        </authorList>
    </citation>
    <scope>PHOSPHORYLATION [LARGE SCALE ANALYSIS] AT SER-22</scope>
    <scope>IDENTIFICATION BY MASS SPECTROMETRY [LARGE SCALE ANALYSIS]</scope>
</reference>
<reference key="4">
    <citation type="journal article" date="2013" name="PLoS ONE">
        <title>A change in configuration of the calmodulin-KCNQ channel complex underlies Ca2+-dependent modulation of KCNQ channel activity.</title>
        <authorList>
            <person name="Kosenko A."/>
            <person name="Hoshi N."/>
        </authorList>
    </citation>
    <scope>INTERACTION WITH KCNQ2</scope>
</reference>
<proteinExistence type="evidence at protein level"/>
<comment type="function">
    <text evidence="2 3">Multivalent scaffold protein that anchors the cAMP-dependent protein kinase/PKA to cytoskeletal and/or organelle-associated proteins, targeting the signal carried by cAMP to specific intracellular effectors (By similarity). Association with the beta2-adrenergic receptor (beta2-AR) not only regulates beta2-AR signaling pathway, but also the activation by PKA by switching off the beta2-AR signaling cascade. Plays a role in long term synaptic potentiation by regulating protein trafficking from the dendritic recycling endosomes to the plasma membrane and controlling both structural and functional plasticity at excitatory synapses (By similarity). In hippocampal pyramidal neurons, recruits KCNK2/TREK-1 channel at postsynaptic dense bodies microdomains and converts it to a leak channel no longer sensitive to stimulation by arachidonic acid, acidic pH or mechanical stress, nor inhibited by Gq-coupled receptors but still under the negative control of Gs-coupled receptors (By similarity). Associates with ORAI1 pore-forming subunit of CRAC channels in Ca(2+) signaling microdomains where it recruits NFATC2/NFAT1 and couples store-operated Ca(2+) influx to calmodulin and calcineurin signaling and activation of NFAT-dependent transcriptional responses.</text>
</comment>
<comment type="subunit">
    <text evidence="1 2 3 6">Binding protein for dimer of the RII-beta regulatory subunit of cAMP-dependent protein kinase (PKA) and also for the protein kinase C (PKC) and the phosphatase calcineurin (PP2B). Each enzyme is inhibited when bound to the anchoring protein. Also binds the beta2-adrenergic receptor. Part of a complex containing AKAP5, ADCY5, ADCY6 and PDE4C (By similarity). Interacts with ADCY8, and enhances its phosphorylation at lipid rafts (By similarity). Interacts with ORAI1 (isoform alpha) (via N-terminus) upon store depletion and in response to LTC4. Does not interact with ORAI2 and ORAI3 paralogs. Interacts (via leucine zipper domain) with NFATC2/NFAT1 (By similarity). Interacts with calmodulin; the interaction is calcium-independent (By similarity). Interacts with KCNQ2; the interaction may help KCNQ2 channel complex to retain calcium-bound calmodulin (PubMed:24349250). Interacts with KCNK2; the channel is recruited to postsynaptic microdomains by AKAP5 where it can integrate neurotransmitter receptor signals. Part of a complex composed of AKAP5 and ADRB2.</text>
</comment>
<comment type="subcellular location">
    <subcellularLocation>
        <location evidence="3">Postsynaptic recycling endosome membrane</location>
        <topology evidence="3">Lipid-anchor</topology>
    </subcellularLocation>
    <subcellularLocation>
        <location evidence="2">Cell projection</location>
        <location evidence="2">Dendrite</location>
    </subcellularLocation>
    <subcellularLocation>
        <location evidence="2">Postsynaptic cell membrane</location>
        <topology>Lipid-anchor</topology>
    </subcellularLocation>
    <text evidence="3">Associates with lipid rafts.</text>
</comment>
<comment type="domain">
    <text evidence="3">RII-alpha binding site, predicted to form an amphipathic helix, could participate in protein-protein interactions with a complementary surface on the R-subunit dimer.</text>
</comment>
<comment type="domain">
    <text evidence="3">The N-terminal region, which is highly basic, is required for interaction with calmodulin.</text>
</comment>
<comment type="PTM">
    <text evidence="3">Palmitoylated. Palmitoylation at Cys-36 and Cys-123 plays a key role in the targeting of AKAP5 to lipid rafts. Palmitoylation by ZDHHC2 is required for AKAP5 function in LTP-stimulated recycling endosome exocytosis.</text>
</comment>
<feature type="chain" id="PRO_0000064516" description="A-kinase anchor protein 5">
    <location>
        <begin position="1"/>
        <end position="714"/>
    </location>
</feature>
<feature type="repeat" description="1; approximate">
    <location>
        <begin position="305"/>
        <end position="312"/>
    </location>
</feature>
<feature type="repeat" description="2; approximate">
    <location>
        <begin position="322"/>
        <end position="329"/>
    </location>
</feature>
<feature type="repeat" description="3; approximate">
    <location>
        <begin position="330"/>
        <end position="337"/>
    </location>
</feature>
<feature type="repeat" description="4; approximate">
    <location>
        <begin position="350"/>
        <end position="357"/>
    </location>
</feature>
<feature type="repeat" description="5; approximate">
    <location>
        <begin position="358"/>
        <end position="365"/>
    </location>
</feature>
<feature type="repeat" description="6; approximate">
    <location>
        <begin position="366"/>
        <end position="373"/>
    </location>
</feature>
<feature type="repeat" description="7; approximate">
    <location>
        <begin position="398"/>
        <end position="405"/>
    </location>
</feature>
<feature type="repeat" description="8; approximate">
    <location>
        <begin position="414"/>
        <end position="421"/>
    </location>
</feature>
<feature type="repeat" description="9">
    <location>
        <begin position="430"/>
        <end position="437"/>
    </location>
</feature>
<feature type="repeat" description="10">
    <location>
        <begin position="438"/>
        <end position="445"/>
    </location>
</feature>
<feature type="repeat" description="11">
    <location>
        <begin position="446"/>
        <end position="453"/>
    </location>
</feature>
<feature type="repeat" description="12">
    <location>
        <begin position="454"/>
        <end position="461"/>
    </location>
</feature>
<feature type="repeat" description="13">
    <location>
        <begin position="462"/>
        <end position="469"/>
    </location>
</feature>
<feature type="repeat" description="14; approximate">
    <location>
        <begin position="470"/>
        <end position="477"/>
    </location>
</feature>
<feature type="repeat" description="15; approximate">
    <location>
        <begin position="486"/>
        <end position="493"/>
    </location>
</feature>
<feature type="repeat" description="16">
    <location>
        <begin position="494"/>
        <end position="501"/>
    </location>
</feature>
<feature type="repeat" description="17">
    <location>
        <begin position="502"/>
        <end position="509"/>
    </location>
</feature>
<feature type="repeat" description="18">
    <location>
        <begin position="510"/>
        <end position="517"/>
    </location>
</feature>
<feature type="repeat" description="19">
    <location>
        <begin position="518"/>
        <end position="525"/>
    </location>
</feature>
<feature type="repeat" description="20; approximate">
    <location>
        <begin position="526"/>
        <end position="533"/>
    </location>
</feature>
<feature type="repeat" description="21">
    <location>
        <begin position="534"/>
        <end position="541"/>
    </location>
</feature>
<feature type="repeat" description="22; approximate">
    <location>
        <begin position="542"/>
        <end position="549"/>
    </location>
</feature>
<feature type="repeat" description="23; approximate">
    <location>
        <begin position="550"/>
        <end position="557"/>
    </location>
</feature>
<feature type="repeat" description="24; approximate">
    <location>
        <begin position="558"/>
        <end position="565"/>
    </location>
</feature>
<feature type="repeat" description="25">
    <location>
        <begin position="566"/>
        <end position="573"/>
    </location>
</feature>
<feature type="repeat" description="26; approximate">
    <location>
        <begin position="574"/>
        <end position="581"/>
    </location>
</feature>
<feature type="repeat" description="27; approximate">
    <location>
        <begin position="582"/>
        <end position="589"/>
    </location>
</feature>
<feature type="repeat" description="28; approximate">
    <location>
        <begin position="590"/>
        <end position="597"/>
    </location>
</feature>
<feature type="region of interest" description="Essential to the intracellular anchoring function" evidence="1">
    <location>
        <begin position="1"/>
        <end position="164"/>
    </location>
</feature>
<feature type="region of interest" description="Disordered" evidence="5">
    <location>
        <begin position="1"/>
        <end position="146"/>
    </location>
</feature>
<feature type="region of interest" description="Disordered" evidence="5">
    <location>
        <begin position="243"/>
        <end position="333"/>
    </location>
</feature>
<feature type="region of interest" description="28 X 8 AA repeats of V-G-Q-A-E-E-A-T">
    <location>
        <begin position="305"/>
        <end position="597"/>
    </location>
</feature>
<feature type="region of interest" description="RII-beta subunit binding domain" evidence="1">
    <location>
        <begin position="675"/>
        <end position="696"/>
    </location>
</feature>
<feature type="region of interest" description="Tethers NFATC2 to CRAC channels" evidence="3">
    <location>
        <begin position="697"/>
        <end position="714"/>
    </location>
</feature>
<feature type="short sequence motif" description="AKAP CaM-binding" evidence="4">
    <location>
        <begin position="74"/>
        <end position="94"/>
    </location>
</feature>
<feature type="compositionally biased region" description="Basic and acidic residues" evidence="5">
    <location>
        <begin position="10"/>
        <end position="32"/>
    </location>
</feature>
<feature type="compositionally biased region" description="Basic residues" evidence="5">
    <location>
        <begin position="37"/>
        <end position="50"/>
    </location>
</feature>
<feature type="compositionally biased region" description="Basic and acidic residues" evidence="5">
    <location>
        <begin position="54"/>
        <end position="63"/>
    </location>
</feature>
<feature type="compositionally biased region" description="Basic and acidic residues" evidence="5">
    <location>
        <begin position="88"/>
        <end position="100"/>
    </location>
</feature>
<feature type="compositionally biased region" description="Polar residues" evidence="5">
    <location>
        <begin position="243"/>
        <end position="268"/>
    </location>
</feature>
<feature type="compositionally biased region" description="Basic and acidic residues" evidence="5">
    <location>
        <begin position="285"/>
        <end position="301"/>
    </location>
</feature>
<feature type="compositionally biased region" description="Polar residues" evidence="5">
    <location>
        <begin position="310"/>
        <end position="323"/>
    </location>
</feature>
<feature type="modified residue" description="Phosphoserine" evidence="2">
    <location>
        <position position="4"/>
    </location>
</feature>
<feature type="modified residue" description="Phosphoserine" evidence="8">
    <location>
        <position position="22"/>
    </location>
</feature>
<feature type="lipid moiety-binding region" description="S-palmitoyl cysteine" evidence="1">
    <location>
        <position position="36"/>
    </location>
</feature>
<feature type="lipid moiety-binding region" description="S-palmitoyl cysteine" evidence="1">
    <location>
        <position position="123"/>
    </location>
</feature>
<feature type="sequence conflict" description="In Ref. 2; AAA50420." evidence="7" ref="2">
    <original>S</original>
    <variation>G</variation>
    <location>
        <position position="251"/>
    </location>
</feature>
<accession>P24587</accession>
<accession>P70593</accession>
<gene>
    <name type="primary">Akap5</name>
    <name type="synonym">Akap150</name>
</gene>
<protein>
    <recommendedName>
        <fullName>A-kinase anchor protein 5</fullName>
        <shortName>AKAP-5</shortName>
    </recommendedName>
    <alternativeName>
        <fullName>A-kinase anchor protein 150 kDa</fullName>
        <shortName>AKAP 150</shortName>
        <shortName>P150</shortName>
    </alternativeName>
    <alternativeName>
        <fullName>cAMP-dependent protein kinase regulatory subunit II high affinity-binding protein</fullName>
    </alternativeName>
</protein>
<sequence length="714" mass="75962">METSVSEIQIETKDEKRPEAASPQKERQERKTATLCFKRRKKVNKKKAKAGSKTAEETEKHAPEAGGSGQRQPAGAWASIKRLVTHRKPSESAEKQKPSEAEMQPEDGALPKKKTKSKLKIPCIRFSRGAKRSRPSKLTEDSGYVRVQGEADDLEIKAQIQPDEQATQAKSTQGLQEDVIVRDGKEIQESHISNNVISGEHVIGIELELEKESSALRMRTPGSEKEAKVILVKQGVQVQEASVLENSAADSPQPVTSTAPLSPATTHQLGLEEPSDSIRESAPSGKDDGRRKTAAEEKKSGETALGQAEEASSVSQADKSVLSQAEEATVGHTEEATVIQAQSQAKEGKLSQAEEATVAQAKETVLSQAEEVKLSQIEEPAISQAKKATVGQAKEAYVSQAEEAIVGHTEKATMGQAEEATVGHIEKTTVGQAEEATVGQAEEATVGQAEEATVGQAEEATVGQAEEATVGQAGEATVSHIEKTTVGQAEEAIVGQAEEATVGQAEEATVGQAEEATVGQAEEATVDQAEEATVGQAEEATVGQAGEAAVGQAEEAIVAQAEEATVGQAGEATVGQAEKATVGQAEEPIVGQAEETVLRHASDLKVNGVDAEKPRSEESKRMEPIAIIITDTEISEFDVKKSKNVPKQFLISMENEQVGVFANDSDFEGRTSEQYETLLIETASSLVKNAIELSVEQLVNEMVSEDNQINTLFQ</sequence>
<organism>
    <name type="scientific">Rattus norvegicus</name>
    <name type="common">Rat</name>
    <dbReference type="NCBI Taxonomy" id="10116"/>
    <lineage>
        <taxon>Eukaryota</taxon>
        <taxon>Metazoa</taxon>
        <taxon>Chordata</taxon>
        <taxon>Craniata</taxon>
        <taxon>Vertebrata</taxon>
        <taxon>Euteleostomi</taxon>
        <taxon>Mammalia</taxon>
        <taxon>Eutheria</taxon>
        <taxon>Euarchontoglires</taxon>
        <taxon>Glires</taxon>
        <taxon>Rodentia</taxon>
        <taxon>Myomorpha</taxon>
        <taxon>Muroidea</taxon>
        <taxon>Muridae</taxon>
        <taxon>Murinae</taxon>
        <taxon>Rattus</taxon>
    </lineage>
</organism>
<name>AKAP5_RAT</name>
<keyword id="KW-0112">Calmodulin-binding</keyword>
<keyword id="KW-1003">Cell membrane</keyword>
<keyword id="KW-0966">Cell projection</keyword>
<keyword id="KW-0967">Endosome</keyword>
<keyword id="KW-0449">Lipoprotein</keyword>
<keyword id="KW-0472">Membrane</keyword>
<keyword id="KW-0564">Palmitate</keyword>
<keyword id="KW-0597">Phosphoprotein</keyword>
<keyword id="KW-0628">Postsynaptic cell membrane</keyword>
<keyword id="KW-1185">Reference proteome</keyword>
<keyword id="KW-0677">Repeat</keyword>
<keyword id="KW-0770">Synapse</keyword>
<evidence type="ECO:0000250" key="1"/>
<evidence type="ECO:0000250" key="2">
    <source>
        <dbReference type="UniProtKB" id="D3YVF0"/>
    </source>
</evidence>
<evidence type="ECO:0000250" key="3">
    <source>
        <dbReference type="UniProtKB" id="P24588"/>
    </source>
</evidence>
<evidence type="ECO:0000255" key="4">
    <source>
        <dbReference type="PROSITE-ProRule" id="PRU01241"/>
    </source>
</evidence>
<evidence type="ECO:0000256" key="5">
    <source>
        <dbReference type="SAM" id="MobiDB-lite"/>
    </source>
</evidence>
<evidence type="ECO:0000269" key="6">
    <source>
    </source>
</evidence>
<evidence type="ECO:0000305" key="7"/>
<evidence type="ECO:0007744" key="8">
    <source>
    </source>
</evidence>